<accession>Q732I4</accession>
<keyword id="KW-0001">2Fe-2S</keyword>
<keyword id="KW-0249">Electron transport</keyword>
<keyword id="KW-0274">FAD</keyword>
<keyword id="KW-0285">Flavoprotein</keyword>
<keyword id="KW-0408">Iron</keyword>
<keyword id="KW-0411">Iron-sulfur</keyword>
<keyword id="KW-0479">Metal-binding</keyword>
<keyword id="KW-0665">Pyrimidine biosynthesis</keyword>
<keyword id="KW-0813">Transport</keyword>
<organism>
    <name type="scientific">Bacillus cereus (strain ATCC 10987 / NRS 248)</name>
    <dbReference type="NCBI Taxonomy" id="222523"/>
    <lineage>
        <taxon>Bacteria</taxon>
        <taxon>Bacillati</taxon>
        <taxon>Bacillota</taxon>
        <taxon>Bacilli</taxon>
        <taxon>Bacillales</taxon>
        <taxon>Bacillaceae</taxon>
        <taxon>Bacillus</taxon>
        <taxon>Bacillus cereus group</taxon>
    </lineage>
</organism>
<evidence type="ECO:0000255" key="1">
    <source>
        <dbReference type="HAMAP-Rule" id="MF_01211"/>
    </source>
</evidence>
<sequence length="259" mass="28439">MMQKQNMIVVNQKEIAKNIYELVLQGTLVQQMNEPGQFVHIKVAEGIAPLLRRPISICNVDQEKNEFTMLYRAEGQGTKTLATRKQGEMVDVLGPLGHGFPVEEAEAGQTALLVGGGIGVPPLYELSQRLVAKGVRVIHILGFQTKDVVFYEEKFAELGDTYVATVDGTHGTKGFVTDVIDHYGIDFDILYSCGPLAMLRALEGRYKEKKAYISLEERMGCGIGACFACVCHLQEDPSGHSYKKVCSDGPVFPIGEVVL</sequence>
<proteinExistence type="inferred from homology"/>
<gene>
    <name evidence="1" type="primary">pyrK</name>
    <name type="ordered locus">BCE_3930</name>
</gene>
<dbReference type="EMBL" id="AE017194">
    <property type="protein sequence ID" value="AAS42833.1"/>
    <property type="molecule type" value="Genomic_DNA"/>
</dbReference>
<dbReference type="SMR" id="Q732I4"/>
<dbReference type="KEGG" id="bca:BCE_3930"/>
<dbReference type="HOGENOM" id="CLU_003827_1_2_9"/>
<dbReference type="UniPathway" id="UPA00070">
    <property type="reaction ID" value="UER00945"/>
</dbReference>
<dbReference type="Proteomes" id="UP000002527">
    <property type="component" value="Chromosome"/>
</dbReference>
<dbReference type="GO" id="GO:0051537">
    <property type="term" value="F:2 iron, 2 sulfur cluster binding"/>
    <property type="evidence" value="ECO:0007669"/>
    <property type="project" value="UniProtKB-KW"/>
</dbReference>
<dbReference type="GO" id="GO:0009055">
    <property type="term" value="F:electron transfer activity"/>
    <property type="evidence" value="ECO:0007669"/>
    <property type="project" value="UniProtKB-UniRule"/>
</dbReference>
<dbReference type="GO" id="GO:0050660">
    <property type="term" value="F:flavin adenine dinucleotide binding"/>
    <property type="evidence" value="ECO:0007669"/>
    <property type="project" value="InterPro"/>
</dbReference>
<dbReference type="GO" id="GO:0046872">
    <property type="term" value="F:metal ion binding"/>
    <property type="evidence" value="ECO:0007669"/>
    <property type="project" value="UniProtKB-KW"/>
</dbReference>
<dbReference type="GO" id="GO:0016491">
    <property type="term" value="F:oxidoreductase activity"/>
    <property type="evidence" value="ECO:0007669"/>
    <property type="project" value="InterPro"/>
</dbReference>
<dbReference type="GO" id="GO:0044205">
    <property type="term" value="P:'de novo' UMP biosynthetic process"/>
    <property type="evidence" value="ECO:0007669"/>
    <property type="project" value="UniProtKB-UniRule"/>
</dbReference>
<dbReference type="CDD" id="cd06218">
    <property type="entry name" value="DHOD_e_trans"/>
    <property type="match status" value="1"/>
</dbReference>
<dbReference type="FunFam" id="2.10.240.10:FF:000001">
    <property type="entry name" value="Dihydroorotate dehydrogenase B (NAD(+)), electron transfer subunit"/>
    <property type="match status" value="1"/>
</dbReference>
<dbReference type="FunFam" id="2.40.30.10:FF:000045">
    <property type="entry name" value="Dihydroorotate dehydrogenase B (NAD(+)), electron transfer subunit"/>
    <property type="match status" value="1"/>
</dbReference>
<dbReference type="FunFam" id="3.40.50.80:FF:000017">
    <property type="entry name" value="Dihydroorotate dehydrogenase B (NAD(+)), electron transfer subunit"/>
    <property type="match status" value="1"/>
</dbReference>
<dbReference type="Gene3D" id="2.10.240.10">
    <property type="entry name" value="Dihydroorotate dehydrogenase, electron transfer subunit"/>
    <property type="match status" value="1"/>
</dbReference>
<dbReference type="Gene3D" id="3.40.50.80">
    <property type="entry name" value="Nucleotide-binding domain of ferredoxin-NADP reductase (FNR) module"/>
    <property type="match status" value="1"/>
</dbReference>
<dbReference type="Gene3D" id="2.40.30.10">
    <property type="entry name" value="Translation factors"/>
    <property type="match status" value="1"/>
</dbReference>
<dbReference type="HAMAP" id="MF_01211">
    <property type="entry name" value="DHODB_Fe_S_bind"/>
    <property type="match status" value="1"/>
</dbReference>
<dbReference type="InterPro" id="IPR012165">
    <property type="entry name" value="Cyt_c3_hydrogenase_gsu"/>
</dbReference>
<dbReference type="InterPro" id="IPR037117">
    <property type="entry name" value="Dihydroorotate_DH_ele_sf"/>
</dbReference>
<dbReference type="InterPro" id="IPR019480">
    <property type="entry name" value="Dihydroorotate_DH_Fe-S-bd"/>
</dbReference>
<dbReference type="InterPro" id="IPR023455">
    <property type="entry name" value="Dihydroorotate_DHASE_ETsu"/>
</dbReference>
<dbReference type="InterPro" id="IPR017927">
    <property type="entry name" value="FAD-bd_FR_type"/>
</dbReference>
<dbReference type="InterPro" id="IPR039261">
    <property type="entry name" value="FNR_nucleotide-bd"/>
</dbReference>
<dbReference type="InterPro" id="IPR001433">
    <property type="entry name" value="OxRdtase_FAD/NAD-bd"/>
</dbReference>
<dbReference type="InterPro" id="IPR050353">
    <property type="entry name" value="PyrK_electron_transfer"/>
</dbReference>
<dbReference type="InterPro" id="IPR017938">
    <property type="entry name" value="Riboflavin_synthase-like_b-brl"/>
</dbReference>
<dbReference type="NCBIfam" id="NF000797">
    <property type="entry name" value="PRK00054.1-2"/>
    <property type="match status" value="1"/>
</dbReference>
<dbReference type="NCBIfam" id="NF000799">
    <property type="entry name" value="PRK00054.1-4"/>
    <property type="match status" value="1"/>
</dbReference>
<dbReference type="PANTHER" id="PTHR43513">
    <property type="entry name" value="DIHYDROOROTATE DEHYDROGENASE B (NAD(+)), ELECTRON TRANSFER SUBUNIT"/>
    <property type="match status" value="1"/>
</dbReference>
<dbReference type="PANTHER" id="PTHR43513:SF3">
    <property type="entry name" value="DIHYDROOROTATE DEHYDROGENASE B (NAD(+)), ELECTRON TRANSFER SUBUNIT-RELATED"/>
    <property type="match status" value="1"/>
</dbReference>
<dbReference type="Pfam" id="PF10418">
    <property type="entry name" value="DHODB_Fe-S_bind"/>
    <property type="match status" value="1"/>
</dbReference>
<dbReference type="Pfam" id="PF00175">
    <property type="entry name" value="NAD_binding_1"/>
    <property type="match status" value="1"/>
</dbReference>
<dbReference type="PIRSF" id="PIRSF006816">
    <property type="entry name" value="Cyc3_hyd_g"/>
    <property type="match status" value="1"/>
</dbReference>
<dbReference type="PRINTS" id="PR00409">
    <property type="entry name" value="PHDIOXRDTASE"/>
</dbReference>
<dbReference type="SUPFAM" id="SSF52343">
    <property type="entry name" value="Ferredoxin reductase-like, C-terminal NADP-linked domain"/>
    <property type="match status" value="1"/>
</dbReference>
<dbReference type="SUPFAM" id="SSF63380">
    <property type="entry name" value="Riboflavin synthase domain-like"/>
    <property type="match status" value="1"/>
</dbReference>
<dbReference type="PROSITE" id="PS51384">
    <property type="entry name" value="FAD_FR"/>
    <property type="match status" value="1"/>
</dbReference>
<comment type="function">
    <text evidence="1">Responsible for channeling the electrons from the oxidation of dihydroorotate from the FMN redox center in the PyrD type B subunit to the ultimate electron acceptor NAD(+).</text>
</comment>
<comment type="cofactor">
    <cofactor evidence="1">
        <name>[2Fe-2S] cluster</name>
        <dbReference type="ChEBI" id="CHEBI:190135"/>
    </cofactor>
    <text evidence="1">Binds 1 [2Fe-2S] cluster per subunit.</text>
</comment>
<comment type="cofactor">
    <cofactor evidence="1">
        <name>FAD</name>
        <dbReference type="ChEBI" id="CHEBI:57692"/>
    </cofactor>
    <text evidence="1">Binds 1 FAD per subunit.</text>
</comment>
<comment type="pathway">
    <text evidence="1">Pyrimidine metabolism; UMP biosynthesis via de novo pathway; orotate from (S)-dihydroorotate (NAD(+) route): step 1/1.</text>
</comment>
<comment type="subunit">
    <text evidence="1">Heterotetramer of 2 PyrK and 2 PyrD type B subunits.</text>
</comment>
<comment type="similarity">
    <text evidence="1">Belongs to the PyrK family.</text>
</comment>
<protein>
    <recommendedName>
        <fullName evidence="1">Dihydroorotate dehydrogenase B (NAD(+)), electron transfer subunit</fullName>
    </recommendedName>
    <alternativeName>
        <fullName evidence="1">Dihydroorotate oxidase B, electron transfer subunit</fullName>
    </alternativeName>
</protein>
<feature type="chain" id="PRO_1000066396" description="Dihydroorotate dehydrogenase B (NAD(+)), electron transfer subunit">
    <location>
        <begin position="1"/>
        <end position="259"/>
    </location>
</feature>
<feature type="domain" description="FAD-binding FR-type" evidence="1">
    <location>
        <begin position="2"/>
        <end position="102"/>
    </location>
</feature>
<feature type="binding site" evidence="1">
    <location>
        <begin position="53"/>
        <end position="56"/>
    </location>
    <ligand>
        <name>FAD</name>
        <dbReference type="ChEBI" id="CHEBI:57692"/>
    </ligand>
</feature>
<feature type="binding site" evidence="1">
    <location>
        <begin position="70"/>
        <end position="72"/>
    </location>
    <ligand>
        <name>FAD</name>
        <dbReference type="ChEBI" id="CHEBI:57692"/>
    </ligand>
</feature>
<feature type="binding site" evidence="1">
    <location>
        <begin position="77"/>
        <end position="78"/>
    </location>
    <ligand>
        <name>FAD</name>
        <dbReference type="ChEBI" id="CHEBI:57692"/>
    </ligand>
</feature>
<feature type="binding site" evidence="1">
    <location>
        <position position="221"/>
    </location>
    <ligand>
        <name>[2Fe-2S] cluster</name>
        <dbReference type="ChEBI" id="CHEBI:190135"/>
    </ligand>
</feature>
<feature type="binding site" evidence="1">
    <location>
        <position position="226"/>
    </location>
    <ligand>
        <name>[2Fe-2S] cluster</name>
        <dbReference type="ChEBI" id="CHEBI:190135"/>
    </ligand>
</feature>
<feature type="binding site" evidence="1">
    <location>
        <position position="229"/>
    </location>
    <ligand>
        <name>[2Fe-2S] cluster</name>
        <dbReference type="ChEBI" id="CHEBI:190135"/>
    </ligand>
</feature>
<feature type="binding site" evidence="1">
    <location>
        <position position="246"/>
    </location>
    <ligand>
        <name>[2Fe-2S] cluster</name>
        <dbReference type="ChEBI" id="CHEBI:190135"/>
    </ligand>
</feature>
<reference key="1">
    <citation type="journal article" date="2004" name="Nucleic Acids Res.">
        <title>The genome sequence of Bacillus cereus ATCC 10987 reveals metabolic adaptations and a large plasmid related to Bacillus anthracis pXO1.</title>
        <authorList>
            <person name="Rasko D.A."/>
            <person name="Ravel J."/>
            <person name="Oekstad O.A."/>
            <person name="Helgason E."/>
            <person name="Cer R.Z."/>
            <person name="Jiang L."/>
            <person name="Shores K.A."/>
            <person name="Fouts D.E."/>
            <person name="Tourasse N.J."/>
            <person name="Angiuoli S.V."/>
            <person name="Kolonay J.F."/>
            <person name="Nelson W.C."/>
            <person name="Kolstoe A.-B."/>
            <person name="Fraser C.M."/>
            <person name="Read T.D."/>
        </authorList>
    </citation>
    <scope>NUCLEOTIDE SEQUENCE [LARGE SCALE GENOMIC DNA]</scope>
    <source>
        <strain>ATCC 10987 / NRS 248</strain>
    </source>
</reference>
<name>PYRK_BACC1</name>